<proteinExistence type="inferred from homology"/>
<feature type="chain" id="PRO_1000025367" description="Co-chaperonin GroES">
    <location>
        <begin position="1"/>
        <end position="96"/>
    </location>
</feature>
<sequence>MNIRPLHDRVIVKRLEVESTSAGGIVLTGSAAEKSTRGEVLAVGNGRILENGTVRPLDVKVGDVVIFNEGYGVKKEKIDGQEVLILSEADLMAIVG</sequence>
<gene>
    <name evidence="1" type="primary">groES</name>
    <name evidence="1" type="synonym">groS</name>
    <name type="ordered locus">Shewmr7_0554</name>
</gene>
<organism>
    <name type="scientific">Shewanella sp. (strain MR-7)</name>
    <dbReference type="NCBI Taxonomy" id="60481"/>
    <lineage>
        <taxon>Bacteria</taxon>
        <taxon>Pseudomonadati</taxon>
        <taxon>Pseudomonadota</taxon>
        <taxon>Gammaproteobacteria</taxon>
        <taxon>Alteromonadales</taxon>
        <taxon>Shewanellaceae</taxon>
        <taxon>Shewanella</taxon>
    </lineage>
</organism>
<name>CH10_SHESR</name>
<protein>
    <recommendedName>
        <fullName evidence="1">Co-chaperonin GroES</fullName>
    </recommendedName>
    <alternativeName>
        <fullName evidence="1">10 kDa chaperonin</fullName>
    </alternativeName>
    <alternativeName>
        <fullName evidence="1">Chaperonin-10</fullName>
        <shortName evidence="1">Cpn10</shortName>
    </alternativeName>
</protein>
<keyword id="KW-0143">Chaperone</keyword>
<keyword id="KW-0963">Cytoplasm</keyword>
<accession>Q0HZ98</accession>
<evidence type="ECO:0000255" key="1">
    <source>
        <dbReference type="HAMAP-Rule" id="MF_00580"/>
    </source>
</evidence>
<reference key="1">
    <citation type="submission" date="2006-08" db="EMBL/GenBank/DDBJ databases">
        <title>Complete sequence of chromosome 1 of Shewanella sp. MR-7.</title>
        <authorList>
            <person name="Copeland A."/>
            <person name="Lucas S."/>
            <person name="Lapidus A."/>
            <person name="Barry K."/>
            <person name="Detter J.C."/>
            <person name="Glavina del Rio T."/>
            <person name="Hammon N."/>
            <person name="Israni S."/>
            <person name="Dalin E."/>
            <person name="Tice H."/>
            <person name="Pitluck S."/>
            <person name="Kiss H."/>
            <person name="Brettin T."/>
            <person name="Bruce D."/>
            <person name="Han C."/>
            <person name="Tapia R."/>
            <person name="Gilna P."/>
            <person name="Schmutz J."/>
            <person name="Larimer F."/>
            <person name="Land M."/>
            <person name="Hauser L."/>
            <person name="Kyrpides N."/>
            <person name="Mikhailova N."/>
            <person name="Nealson K."/>
            <person name="Konstantinidis K."/>
            <person name="Klappenbach J."/>
            <person name="Tiedje J."/>
            <person name="Richardson P."/>
        </authorList>
    </citation>
    <scope>NUCLEOTIDE SEQUENCE [LARGE SCALE GENOMIC DNA]</scope>
    <source>
        <strain>MR-7</strain>
    </source>
</reference>
<dbReference type="EMBL" id="CP000444">
    <property type="protein sequence ID" value="ABI41557.1"/>
    <property type="molecule type" value="Genomic_DNA"/>
</dbReference>
<dbReference type="SMR" id="Q0HZ98"/>
<dbReference type="KEGG" id="shm:Shewmr7_0554"/>
<dbReference type="HOGENOM" id="CLU_132825_1_1_6"/>
<dbReference type="GO" id="GO:0005737">
    <property type="term" value="C:cytoplasm"/>
    <property type="evidence" value="ECO:0007669"/>
    <property type="project" value="UniProtKB-SubCell"/>
</dbReference>
<dbReference type="GO" id="GO:0005524">
    <property type="term" value="F:ATP binding"/>
    <property type="evidence" value="ECO:0007669"/>
    <property type="project" value="InterPro"/>
</dbReference>
<dbReference type="GO" id="GO:0046872">
    <property type="term" value="F:metal ion binding"/>
    <property type="evidence" value="ECO:0007669"/>
    <property type="project" value="TreeGrafter"/>
</dbReference>
<dbReference type="GO" id="GO:0044183">
    <property type="term" value="F:protein folding chaperone"/>
    <property type="evidence" value="ECO:0007669"/>
    <property type="project" value="InterPro"/>
</dbReference>
<dbReference type="GO" id="GO:0051087">
    <property type="term" value="F:protein-folding chaperone binding"/>
    <property type="evidence" value="ECO:0007669"/>
    <property type="project" value="TreeGrafter"/>
</dbReference>
<dbReference type="GO" id="GO:0051082">
    <property type="term" value="F:unfolded protein binding"/>
    <property type="evidence" value="ECO:0007669"/>
    <property type="project" value="TreeGrafter"/>
</dbReference>
<dbReference type="GO" id="GO:0051085">
    <property type="term" value="P:chaperone cofactor-dependent protein refolding"/>
    <property type="evidence" value="ECO:0007669"/>
    <property type="project" value="TreeGrafter"/>
</dbReference>
<dbReference type="CDD" id="cd00320">
    <property type="entry name" value="cpn10"/>
    <property type="match status" value="1"/>
</dbReference>
<dbReference type="FunFam" id="2.30.33.40:FF:000001">
    <property type="entry name" value="10 kDa chaperonin"/>
    <property type="match status" value="1"/>
</dbReference>
<dbReference type="Gene3D" id="2.30.33.40">
    <property type="entry name" value="GroES chaperonin"/>
    <property type="match status" value="1"/>
</dbReference>
<dbReference type="HAMAP" id="MF_00580">
    <property type="entry name" value="CH10"/>
    <property type="match status" value="1"/>
</dbReference>
<dbReference type="InterPro" id="IPR020818">
    <property type="entry name" value="Chaperonin_GroES"/>
</dbReference>
<dbReference type="InterPro" id="IPR037124">
    <property type="entry name" value="Chaperonin_GroES_sf"/>
</dbReference>
<dbReference type="InterPro" id="IPR018369">
    <property type="entry name" value="Chaprnonin_Cpn10_CS"/>
</dbReference>
<dbReference type="InterPro" id="IPR011032">
    <property type="entry name" value="GroES-like_sf"/>
</dbReference>
<dbReference type="NCBIfam" id="NF001526">
    <property type="entry name" value="PRK00364.1-1"/>
    <property type="match status" value="1"/>
</dbReference>
<dbReference type="NCBIfam" id="NF001527">
    <property type="entry name" value="PRK00364.1-2"/>
    <property type="match status" value="1"/>
</dbReference>
<dbReference type="NCBIfam" id="NF001531">
    <property type="entry name" value="PRK00364.2-2"/>
    <property type="match status" value="1"/>
</dbReference>
<dbReference type="PANTHER" id="PTHR10772">
    <property type="entry name" value="10 KDA HEAT SHOCK PROTEIN"/>
    <property type="match status" value="1"/>
</dbReference>
<dbReference type="PANTHER" id="PTHR10772:SF58">
    <property type="entry name" value="CO-CHAPERONIN GROES"/>
    <property type="match status" value="1"/>
</dbReference>
<dbReference type="Pfam" id="PF00166">
    <property type="entry name" value="Cpn10"/>
    <property type="match status" value="1"/>
</dbReference>
<dbReference type="PRINTS" id="PR00297">
    <property type="entry name" value="CHAPERONIN10"/>
</dbReference>
<dbReference type="SMART" id="SM00883">
    <property type="entry name" value="Cpn10"/>
    <property type="match status" value="1"/>
</dbReference>
<dbReference type="SUPFAM" id="SSF50129">
    <property type="entry name" value="GroES-like"/>
    <property type="match status" value="1"/>
</dbReference>
<dbReference type="PROSITE" id="PS00681">
    <property type="entry name" value="CHAPERONINS_CPN10"/>
    <property type="match status" value="1"/>
</dbReference>
<comment type="function">
    <text evidence="1">Together with the chaperonin GroEL, plays an essential role in assisting protein folding. The GroEL-GroES system forms a nano-cage that allows encapsulation of the non-native substrate proteins and provides a physical environment optimized to promote and accelerate protein folding. GroES binds to the apical surface of the GroEL ring, thereby capping the opening of the GroEL channel.</text>
</comment>
<comment type="subunit">
    <text evidence="1">Heptamer of 7 subunits arranged in a ring. Interacts with the chaperonin GroEL.</text>
</comment>
<comment type="subcellular location">
    <subcellularLocation>
        <location evidence="1">Cytoplasm</location>
    </subcellularLocation>
</comment>
<comment type="similarity">
    <text evidence="1">Belongs to the GroES chaperonin family.</text>
</comment>